<comment type="function">
    <text evidence="6 7 9 10">Forms homotetrameric potassium sensitive ion channels (viroporin) and may modulate virus release. Up-regulates expression of fibrinogen subunits FGA, FGB and FGG in host lung epithelial cells. Induces apoptosis in cell culture. Down-regulates the type 1 interferon receptor by inducing serine phosphorylation within the IFN alpha-receptor subunit 1 (IFNAR1) degradation motif and increasing IFNAR1 ubiquitination.</text>
</comment>
<comment type="subunit">
    <text evidence="4 5 9">Homotetramer composed of two homodimers linked non covalently. Interacts with M, S and E proteins. Also interacts with the accessory protein 7a.</text>
</comment>
<comment type="interaction">
    <interactant intactId="EBI-15595051">
        <id>P59632</id>
    </interactant>
    <interactant intactId="EBI-15595051">
        <id>P59632</id>
        <label>3a</label>
    </interactant>
    <organismsDiffer>false</organismsDiffer>
    <experiments>3</experiments>
</comment>
<comment type="interaction">
    <interactant intactId="EBI-15595051">
        <id>P59632</id>
    </interactant>
    <interactant intactId="EBI-25487824">
        <id>P59596</id>
        <label>M</label>
    </interactant>
    <organismsDiffer>false</organismsDiffer>
    <experiments>2</experiments>
</comment>
<comment type="interaction">
    <interactant intactId="EBI-15595051">
        <id>P59632</id>
    </interactant>
    <interactant intactId="EBI-25474098">
        <id>PRO_0000037310</id>
        <label>rep</label>
        <dbReference type="UniProtKB" id="P0C6X7"/>
    </interactant>
    <organismsDiffer>false</organismsDiffer>
    <experiments>2</experiments>
</comment>
<comment type="interaction">
    <interactant intactId="EBI-15595051">
        <id>P59632</id>
    </interactant>
    <interactant intactId="EBI-79998">
        <id>P33724</id>
        <label>CAV1</label>
    </interactant>
    <organismsDiffer>true</organismsDiffer>
    <experiments>5</experiments>
</comment>
<comment type="subcellular location">
    <subcellularLocation>
        <location>Virion</location>
    </subcellularLocation>
    <subcellularLocation>
        <location>Host Golgi apparatus membrane</location>
        <topology>Multi-pass membrane protein</topology>
    </subcellularLocation>
    <subcellularLocation>
        <location>Host cell membrane</location>
        <topology>Multi-pass membrane protein</topology>
    </subcellularLocation>
    <subcellularLocation>
        <location>Secreted</location>
    </subcellularLocation>
    <subcellularLocation>
        <location>Host cytoplasm</location>
    </subcellularLocation>
    <text>The cell surface expressed protein can undergo endocytosis. The protein is secreted in association with membranous structures.</text>
</comment>
<comment type="domain">
    <text>The second or the third transmembrane region are responsible for Golgi localization.</text>
</comment>
<comment type="PTM">
    <text evidence="8">Exists in both O-glycosylated and non-glycosylated forms. The glycosylated form is associated with the virion.</text>
</comment>
<feature type="chain" id="PRO_0000106131" description="ORF3a protein">
    <location>
        <begin position="1"/>
        <end position="274"/>
    </location>
</feature>
<feature type="topological domain" description="Extracellular" evidence="11">
    <location>
        <begin position="1"/>
        <end position="34"/>
    </location>
</feature>
<feature type="transmembrane region" description="Helical" evidence="1">
    <location>
        <begin position="35"/>
        <end position="55"/>
    </location>
</feature>
<feature type="topological domain" description="Cytoplasmic" evidence="1">
    <location>
        <begin position="56"/>
        <end position="78"/>
    </location>
</feature>
<feature type="transmembrane region" description="Helical" evidence="1">
    <location>
        <begin position="79"/>
        <end position="99"/>
    </location>
</feature>
<feature type="topological domain" description="Extracellular" evidence="1">
    <location>
        <begin position="100"/>
        <end position="104"/>
    </location>
</feature>
<feature type="transmembrane region" description="Helical" evidence="1">
    <location>
        <begin position="105"/>
        <end position="125"/>
    </location>
</feature>
<feature type="topological domain" description="Cytoplasmic" evidence="11">
    <location>
        <begin position="126"/>
        <end position="274"/>
    </location>
</feature>
<feature type="domain" description="CoV 3a-like viroporin TM" evidence="2">
    <location>
        <begin position="33"/>
        <end position="141"/>
    </location>
</feature>
<feature type="domain" description="CoV 3a-like viroporin CD" evidence="3">
    <location>
        <begin position="145"/>
        <end position="237"/>
    </location>
</feature>
<feature type="site" description="Involved in polymerization">
    <location>
        <position position="133"/>
    </location>
</feature>
<feature type="glycosylation site" description="O-linked (GalNAc...) serine; by host" evidence="1">
    <location>
        <position position="27"/>
    </location>
</feature>
<feature type="glycosylation site" description="O-linked (GalNAc...) threonine; by host" evidence="12">
    <location>
        <position position="28"/>
    </location>
</feature>
<feature type="glycosylation site" description="O-linked (GalNAc...) threonine; by host" evidence="12">
    <location>
        <position position="32"/>
    </location>
</feature>
<feature type="glycosylation site" description="O-linked (GalNAc...) threonine; by host" evidence="1">
    <location>
        <position position="34"/>
    </location>
</feature>
<feature type="sequence variant" description="In strain: Isolate Tor2, Isolate BJ02 and Isolate BJ03.">
    <original>G</original>
    <variation>R</variation>
    <location>
        <position position="11"/>
    </location>
</feature>
<feature type="sequence variant" description="In strain: Isolate Shanghai LY.">
    <original>I</original>
    <variation>T</variation>
    <location>
        <position position="20"/>
    </location>
</feature>
<feature type="sequence variant" description="In strain: Isolate Shanghai QXC1.">
    <original>V</original>
    <variation>A</variation>
    <location>
        <position position="29"/>
    </location>
</feature>
<feature type="sequence variant" description="In strain: Isolate HKU-39849.">
    <original>M</original>
    <variation>K</variation>
    <location>
        <position position="101"/>
    </location>
</feature>
<feature type="sequence variant" description="In strain: Isolate TWK.">
    <original>L</original>
    <variation>F</variation>
    <location>
        <position position="129"/>
    </location>
</feature>
<feature type="sequence variant" description="In strain: Isolate BJ01.">
    <original>K</original>
    <variation>Q</variation>
    <location>
        <position position="136"/>
    </location>
</feature>
<feature type="sequence variant" description="In strain: Isolate GD01.">
    <original>E</original>
    <variation>A</variation>
    <location>
        <position position="171"/>
    </location>
</feature>
<feature type="sequence variant" description="In strain: Isolate GD01.">
    <original>R</original>
    <variation>W</variation>
    <location>
        <position position="193"/>
    </location>
</feature>
<feature type="sequence variant" description="In strain: Isolate Shanghai QXC1.">
    <original>D</original>
    <variation>N</variation>
    <location>
        <position position="222"/>
    </location>
</feature>
<feature type="mutagenesis site" description="Complete loss of O-glycosylation; when associated with A-28; A-32 and A-34." evidence="8">
    <original>S</original>
    <variation>G</variation>
    <location>
        <position position="27"/>
    </location>
</feature>
<feature type="mutagenesis site" description="Complete loss of O-glycosylation; when associated with A-27; A-32 and A-34." evidence="8">
    <original>T</original>
    <variation>A</variation>
    <location>
        <position position="28"/>
    </location>
</feature>
<feature type="mutagenesis site" description="Complete loss of O-glycosylation; when associated with A-27; A-28 and A-34." evidence="8">
    <original>T</original>
    <variation>A</variation>
    <location>
        <position position="32"/>
    </location>
</feature>
<feature type="mutagenesis site" description="Complete loss of O-glycosylation; when associated with A-27; A-28 and A-32." evidence="8">
    <original>T</original>
    <variation>A</variation>
    <location>
        <position position="34"/>
    </location>
</feature>
<feature type="mutagenesis site" description="No effect on polymerization." evidence="9">
    <original>C</original>
    <variation>A</variation>
    <location>
        <position position="81"/>
    </location>
</feature>
<feature type="mutagenesis site" description="No effect on polymerization." evidence="9">
    <original>C</original>
    <variation>A</variation>
    <location>
        <position position="117"/>
    </location>
</feature>
<feature type="mutagenesis site" description="No effect on polymerization." evidence="9">
    <original>C</original>
    <variation>A</variation>
    <location>
        <position position="121"/>
    </location>
</feature>
<feature type="mutagenesis site" description="No effect on polymerization." evidence="9">
    <original>C</original>
    <variation>A</variation>
    <location>
        <position position="127"/>
    </location>
</feature>
<feature type="mutagenesis site" description="No effect on polymerization." evidence="9">
    <original>C</original>
    <variation>A</variation>
    <location>
        <position position="130"/>
    </location>
</feature>
<feature type="mutagenesis site" description="Almost complete loss of polymerization ability." evidence="9">
    <original>C</original>
    <variation>A</variation>
    <location>
        <position position="133"/>
    </location>
</feature>
<feature type="mutagenesis site" description="No effect on polymerization." evidence="9">
    <original>C</original>
    <variation>A</variation>
    <location>
        <position position="148"/>
    </location>
</feature>
<feature type="mutagenesis site" description="No effect on polymerization." evidence="9">
    <original>C</original>
    <variation>A</variation>
    <location>
        <position position="157"/>
    </location>
</feature>
<feature type="helix" evidence="13">
    <location>
        <begin position="44"/>
        <end position="60"/>
    </location>
</feature>
<feature type="helix" evidence="13">
    <location>
        <begin position="68"/>
        <end position="99"/>
    </location>
</feature>
<feature type="turn" evidence="13">
    <location>
        <begin position="100"/>
        <end position="104"/>
    </location>
</feature>
<feature type="helix" evidence="13">
    <location>
        <begin position="106"/>
        <end position="133"/>
    </location>
</feature>
<feature type="helix" evidence="13">
    <location>
        <begin position="137"/>
        <end position="140"/>
    </location>
</feature>
<feature type="strand" evidence="13">
    <location>
        <begin position="144"/>
        <end position="150"/>
    </location>
</feature>
<feature type="strand" evidence="13">
    <location>
        <begin position="155"/>
        <end position="162"/>
    </location>
</feature>
<feature type="strand" evidence="13">
    <location>
        <begin position="165"/>
        <end position="172"/>
    </location>
</feature>
<feature type="strand" evidence="13">
    <location>
        <begin position="183"/>
        <end position="186"/>
    </location>
</feature>
<feature type="strand" evidence="13">
    <location>
        <begin position="189"/>
        <end position="192"/>
    </location>
</feature>
<feature type="strand" evidence="13">
    <location>
        <begin position="199"/>
        <end position="204"/>
    </location>
</feature>
<feature type="strand" evidence="13">
    <location>
        <begin position="209"/>
        <end position="218"/>
    </location>
</feature>
<feature type="helix" evidence="13">
    <location>
        <begin position="220"/>
        <end position="223"/>
    </location>
</feature>
<feature type="strand" evidence="13">
    <location>
        <begin position="229"/>
        <end position="235"/>
    </location>
</feature>
<dbReference type="EMBL" id="AY278741">
    <property type="protein sequence ID" value="AAP13446.1"/>
    <property type="molecule type" value="Genomic_RNA"/>
</dbReference>
<dbReference type="EMBL" id="AY274119">
    <property type="protein sequence ID" value="AAP41038.1"/>
    <property type="molecule type" value="Genomic_RNA"/>
</dbReference>
<dbReference type="EMBL" id="AY282752">
    <property type="status" value="NOT_ANNOTATED_CDS"/>
    <property type="molecule type" value="Genomic_RNA"/>
</dbReference>
<dbReference type="EMBL" id="AY278554">
    <property type="protein sequence ID" value="AAP13568.1"/>
    <property type="molecule type" value="Genomic_RNA"/>
</dbReference>
<dbReference type="EMBL" id="AY278491">
    <property type="status" value="NOT_ANNOTATED_CDS"/>
    <property type="molecule type" value="Genomic_RNA"/>
</dbReference>
<dbReference type="EMBL" id="AY278487">
    <property type="status" value="NOT_ANNOTATED_CDS"/>
    <property type="molecule type" value="Genomic_RNA"/>
</dbReference>
<dbReference type="EMBL" id="AY278488">
    <property type="protein sequence ID" value="AAP30031.1"/>
    <property type="molecule type" value="Genomic_RNA"/>
</dbReference>
<dbReference type="EMBL" id="AY278489">
    <property type="protein sequence ID" value="AAP51228.1"/>
    <property type="molecule type" value="Genomic_RNA"/>
</dbReference>
<dbReference type="EMBL" id="AY278490">
    <property type="status" value="NOT_ANNOTATED_CDS"/>
    <property type="molecule type" value="Genomic_RNA"/>
</dbReference>
<dbReference type="EMBL" id="AY279354">
    <property type="status" value="NOT_ANNOTATED_CDS"/>
    <property type="molecule type" value="Genomic_RNA"/>
</dbReference>
<dbReference type="EMBL" id="AY291451">
    <property type="protein sequence ID" value="AAP37018.1"/>
    <property type="molecule type" value="Genomic_RNA"/>
</dbReference>
<dbReference type="EMBL" id="AY310120">
    <property type="protein sequence ID" value="AAP50486.1"/>
    <property type="molecule type" value="Genomic_RNA"/>
</dbReference>
<dbReference type="EMBL" id="AY291315">
    <property type="protein sequence ID" value="AAP33698.1"/>
    <property type="molecule type" value="Genomic_RNA"/>
</dbReference>
<dbReference type="EMBL" id="AY338174">
    <property type="protein sequence ID" value="AAQ01598.1"/>
    <property type="molecule type" value="Genomic_RNA"/>
</dbReference>
<dbReference type="EMBL" id="AY338175">
    <property type="protein sequence ID" value="AAQ01610.1"/>
    <property type="molecule type" value="Genomic_RNA"/>
</dbReference>
<dbReference type="EMBL" id="AY348314">
    <property type="protein sequence ID" value="AAP97883.1"/>
    <property type="molecule type" value="Genomic_RNA"/>
</dbReference>
<dbReference type="EMBL" id="AP006557">
    <property type="protein sequence ID" value="BAC81349.1"/>
    <property type="molecule type" value="Genomic_RNA"/>
</dbReference>
<dbReference type="EMBL" id="AP006558">
    <property type="protein sequence ID" value="BAC81363.1"/>
    <property type="molecule type" value="Genomic_RNA"/>
</dbReference>
<dbReference type="EMBL" id="AP006559">
    <property type="protein sequence ID" value="BAC81377.1"/>
    <property type="molecule type" value="Genomic_RNA"/>
</dbReference>
<dbReference type="EMBL" id="AP006560">
    <property type="protein sequence ID" value="BAC81391.1"/>
    <property type="molecule type" value="Genomic_RNA"/>
</dbReference>
<dbReference type="EMBL" id="AP006561">
    <property type="protein sequence ID" value="BAC81405.1"/>
    <property type="molecule type" value="Genomic_RNA"/>
</dbReference>
<dbReference type="EMBL" id="AY323977">
    <property type="protein sequence ID" value="AAP72975.1"/>
    <property type="molecule type" value="Genomic_RNA"/>
</dbReference>
<dbReference type="EMBL" id="AY427439">
    <property type="protein sequence ID" value="AAQ94061.1"/>
    <property type="molecule type" value="Genomic_RNA"/>
</dbReference>
<dbReference type="EMBL" id="AY463059">
    <property type="protein sequence ID" value="AAP82984.2"/>
    <property type="molecule type" value="Genomic_RNA"/>
</dbReference>
<dbReference type="EMBL" id="AH012999">
    <property type="protein sequence ID" value="AAP82969.1"/>
    <property type="molecule type" value="Genomic_RNA"/>
</dbReference>
<dbReference type="PDB" id="8EQS">
    <property type="method" value="EM"/>
    <property type="resolution" value="3.10 A"/>
    <property type="chains" value="A/B=1-274"/>
</dbReference>
<dbReference type="PDBsum" id="8EQS"/>
<dbReference type="EMDB" id="EMD-28544"/>
<dbReference type="SMR" id="P59632"/>
<dbReference type="BioGRID" id="4383917">
    <property type="interactions" value="81"/>
</dbReference>
<dbReference type="ComplexPortal" id="CPX-6095">
    <property type="entry name" value="SARS-CoV 3a complex"/>
</dbReference>
<dbReference type="DIP" id="DIP-61251N"/>
<dbReference type="IntAct" id="P59632">
    <property type="interactions" value="58"/>
</dbReference>
<dbReference type="MINT" id="P59632"/>
<dbReference type="TCDB" id="1.A.57.1.1">
    <property type="family name" value="the human sars coronavirus viroporin (sars-vp) family"/>
</dbReference>
<dbReference type="GlyGen" id="P59632">
    <property type="glycosylation" value="4 sites"/>
</dbReference>
<dbReference type="iPTMnet" id="P59632"/>
<dbReference type="Reactome" id="R-HSA-9678110">
    <property type="pathway name" value="Attachment and Entry"/>
</dbReference>
<dbReference type="Reactome" id="R-HSA-9679509">
    <property type="pathway name" value="Virion Assembly and Release"/>
</dbReference>
<dbReference type="Reactome" id="R-HSA-9683673">
    <property type="pathway name" value="Maturation of protein 3a"/>
</dbReference>
<dbReference type="Reactome" id="R-HSA-9683701">
    <property type="pathway name" value="Translation of Structural Proteins"/>
</dbReference>
<dbReference type="Reactome" id="R-HSA-9686347">
    <property type="pathway name" value="Microbial modulation of RIPK1-mediated regulated necrosis"/>
</dbReference>
<dbReference type="Reactome" id="R-HSA-9692913">
    <property type="pathway name" value="SARS-CoV-1-mediated effects on programmed cell death"/>
</dbReference>
<dbReference type="Reactome" id="R-HSA-9692916">
    <property type="pathway name" value="SARS-CoV-1 activates/modulates innate immune responses"/>
</dbReference>
<dbReference type="Reactome" id="R-HSA-9735871">
    <property type="pathway name" value="SARS-CoV-1 targets host intracellular signalling and regulatory pathways"/>
</dbReference>
<dbReference type="SIGNOR" id="P59632"/>
<dbReference type="Proteomes" id="UP000000354">
    <property type="component" value="Segment"/>
</dbReference>
<dbReference type="Proteomes" id="UP000103670">
    <property type="component" value="Segment"/>
</dbReference>
<dbReference type="Proteomes" id="UP000109640">
    <property type="component" value="Segment"/>
</dbReference>
<dbReference type="Proteomes" id="UP000116947">
    <property type="component" value="Segment"/>
</dbReference>
<dbReference type="Proteomes" id="UP000121636">
    <property type="component" value="Segment"/>
</dbReference>
<dbReference type="Proteomes" id="UP000131569">
    <property type="component" value="Segment"/>
</dbReference>
<dbReference type="Proteomes" id="UP000131955">
    <property type="component" value="Segment"/>
</dbReference>
<dbReference type="Proteomes" id="UP000137377">
    <property type="component" value="Genome"/>
</dbReference>
<dbReference type="Proteomes" id="UP000138690">
    <property type="component" value="Segment"/>
</dbReference>
<dbReference type="Proteomes" id="UP000143093">
    <property type="component" value="Segment"/>
</dbReference>
<dbReference type="Proteomes" id="UP000145651">
    <property type="component" value="Segment"/>
</dbReference>
<dbReference type="Proteomes" id="UP000146108">
    <property type="component" value="Segment"/>
</dbReference>
<dbReference type="Proteomes" id="UP000146181">
    <property type="component" value="Segment"/>
</dbReference>
<dbReference type="Proteomes" id="UP000146296">
    <property type="component" value="Segment"/>
</dbReference>
<dbReference type="Proteomes" id="UP000148194">
    <property type="component" value="Segment"/>
</dbReference>
<dbReference type="Proteomes" id="UP000153467">
    <property type="component" value="Segment"/>
</dbReference>
<dbReference type="Proteomes" id="UP000160648">
    <property type="component" value="Segment"/>
</dbReference>
<dbReference type="Proteomes" id="UP000164441">
    <property type="component" value="Segment"/>
</dbReference>
<dbReference type="Proteomes" id="UP000172416">
    <property type="component" value="Segment"/>
</dbReference>
<dbReference type="Proteomes" id="UP000180358">
    <property type="component" value="Segment"/>
</dbReference>
<dbReference type="GO" id="GO:0005576">
    <property type="term" value="C:extracellular region"/>
    <property type="evidence" value="ECO:0000304"/>
    <property type="project" value="Reactome"/>
</dbReference>
<dbReference type="GO" id="GO:0044178">
    <property type="term" value="C:host cell Golgi membrane"/>
    <property type="evidence" value="ECO:0007669"/>
    <property type="project" value="UniProtKB-SubCell"/>
</dbReference>
<dbReference type="GO" id="GO:0020002">
    <property type="term" value="C:host cell plasma membrane"/>
    <property type="evidence" value="ECO:0007669"/>
    <property type="project" value="UniProtKB-SubCell"/>
</dbReference>
<dbReference type="GO" id="GO:0005886">
    <property type="term" value="C:plasma membrane"/>
    <property type="evidence" value="ECO:0000314"/>
    <property type="project" value="ComplexPortal"/>
</dbReference>
<dbReference type="GO" id="GO:0055036">
    <property type="term" value="C:virion membrane"/>
    <property type="evidence" value="ECO:0000304"/>
    <property type="project" value="Reactome"/>
</dbReference>
<dbReference type="GO" id="GO:0005891">
    <property type="term" value="C:voltage-gated calcium channel complex"/>
    <property type="evidence" value="ECO:0000266"/>
    <property type="project" value="ComplexPortal"/>
</dbReference>
<dbReference type="GO" id="GO:0008076">
    <property type="term" value="C:voltage-gated potassium channel complex"/>
    <property type="evidence" value="ECO:0000353"/>
    <property type="project" value="ComplexPortal"/>
</dbReference>
<dbReference type="GO" id="GO:0042802">
    <property type="term" value="F:identical protein binding"/>
    <property type="evidence" value="ECO:0000353"/>
    <property type="project" value="IntAct"/>
</dbReference>
<dbReference type="GO" id="GO:0005216">
    <property type="term" value="F:monoatomic ion channel activity"/>
    <property type="evidence" value="ECO:0007669"/>
    <property type="project" value="InterPro"/>
</dbReference>
<dbReference type="GO" id="GO:0098662">
    <property type="term" value="P:inorganic cation transmembrane transport"/>
    <property type="evidence" value="ECO:0000314"/>
    <property type="project" value="ComplexPortal"/>
</dbReference>
<dbReference type="GO" id="GO:0141079">
    <property type="term" value="P:symbiont-mediated activation of host inflammasome-mediated signal transduction"/>
    <property type="evidence" value="ECO:0000269"/>
    <property type="project" value="SigSci"/>
</dbReference>
<dbReference type="GO" id="GO:0052170">
    <property type="term" value="P:symbiont-mediated suppression of host innate immune response"/>
    <property type="evidence" value="ECO:0007669"/>
    <property type="project" value="UniProtKB-KW"/>
</dbReference>
<dbReference type="GO" id="GO:0039502">
    <property type="term" value="P:symbiont-mediated suppression of host type I interferon-mediated signaling pathway"/>
    <property type="evidence" value="ECO:0007669"/>
    <property type="project" value="UniProtKB-KW"/>
</dbReference>
<dbReference type="CDD" id="cd21648">
    <property type="entry name" value="SARS-CoV-like_ORF3a"/>
    <property type="match status" value="1"/>
</dbReference>
<dbReference type="InterPro" id="IPR046446">
    <property type="entry name" value="a/bCoV_VIROPORIN_3A-like_CD"/>
</dbReference>
<dbReference type="InterPro" id="IPR046445">
    <property type="entry name" value="a/bCoV_VIROPORIN_3A-like_TM"/>
</dbReference>
<dbReference type="InterPro" id="IPR024407">
    <property type="entry name" value="Protein_3a_bCoV"/>
</dbReference>
<dbReference type="Pfam" id="PF11289">
    <property type="entry name" value="bCoV_viroporin"/>
    <property type="match status" value="1"/>
</dbReference>
<dbReference type="PROSITE" id="PS51967">
    <property type="entry name" value="COV_VIROPORIN_3A_CD"/>
    <property type="match status" value="1"/>
</dbReference>
<dbReference type="PROSITE" id="PS51966">
    <property type="entry name" value="COV_VIROPORIN_3A_TM"/>
    <property type="match status" value="1"/>
</dbReference>
<sequence length="274" mass="30903">MDLFMRFFTLGSITAQPVKIDNASPASTVHATATIPLQASLPFGWLVIGVAFLAVFQSATKIIALNKRWQLALYKGFQFICNLLLLFVTIYSHLLLVAAGMEAQFLYLYALIYFLQCINACRIIMRCWLCWKCKSKNPLLYDANYFVCWHTHNYDYCIPYNSVTDTIVVTEGDGISTPKLKEDYQIGGYSEDRHSGVKDYVVVHGYFTEVYYQLESTQITTDTGIENATFFIFNKLVKDPPNVQIHTIDGSSGVANPAMDPIYDEPTTTTSVPL</sequence>
<protein>
    <recommendedName>
        <fullName>ORF3a protein</fullName>
    </recommendedName>
    <alternativeName>
        <fullName>Accessory protein 3a</fullName>
    </alternativeName>
    <alternativeName>
        <fullName>Protein 3a</fullName>
    </alternativeName>
    <alternativeName>
        <fullName>Protein U274</fullName>
    </alternativeName>
    <alternativeName>
        <fullName>Protein X1</fullName>
    </alternativeName>
</protein>
<name>AP3A_SARS</name>
<organismHost>
    <name type="scientific">Homo sapiens</name>
    <name type="common">Human</name>
    <dbReference type="NCBI Taxonomy" id="9606"/>
</organismHost>
<organismHost>
    <name type="scientific">Paguma larvata</name>
    <name type="common">Masked palm civet</name>
    <dbReference type="NCBI Taxonomy" id="9675"/>
</organismHost>
<keyword id="KW-0002">3D-structure</keyword>
<keyword id="KW-0053">Apoptosis</keyword>
<keyword id="KW-0325">Glycoprotein</keyword>
<keyword id="KW-1032">Host cell membrane</keyword>
<keyword id="KW-1035">Host cytoplasm</keyword>
<keyword id="KW-1040">Host Golgi apparatus</keyword>
<keyword id="KW-1043">Host membrane</keyword>
<keyword id="KW-0945">Host-virus interaction</keyword>
<keyword id="KW-1090">Inhibition of host innate immune response by virus</keyword>
<keyword id="KW-1091">Inhibition of host interferon receptors by virus</keyword>
<keyword id="KW-1114">Inhibition of host interferon signaling pathway by virus</keyword>
<keyword id="KW-0922">Interferon antiviral system evasion</keyword>
<keyword id="KW-0407">Ion channel</keyword>
<keyword id="KW-0406">Ion transport</keyword>
<keyword id="KW-0472">Membrane</keyword>
<keyword id="KW-1185">Reference proteome</keyword>
<keyword id="KW-0964">Secreted</keyword>
<keyword id="KW-0812">Transmembrane</keyword>
<keyword id="KW-1133">Transmembrane helix</keyword>
<keyword id="KW-0813">Transport</keyword>
<keyword id="KW-0899">Viral immunoevasion</keyword>
<keyword id="KW-1182">Viral ion channel</keyword>
<keyword id="KW-0946">Virion</keyword>
<organism>
    <name type="scientific">Severe acute respiratory syndrome coronavirus</name>
    <name type="common">SARS-CoV</name>
    <dbReference type="NCBI Taxonomy" id="694009"/>
    <lineage>
        <taxon>Viruses</taxon>
        <taxon>Riboviria</taxon>
        <taxon>Orthornavirae</taxon>
        <taxon>Pisuviricota</taxon>
        <taxon>Pisoniviricetes</taxon>
        <taxon>Nidovirales</taxon>
        <taxon>Cornidovirineae</taxon>
        <taxon>Coronaviridae</taxon>
        <taxon>Orthocoronavirinae</taxon>
        <taxon>Betacoronavirus</taxon>
        <taxon>Sarbecovirus</taxon>
    </lineage>
</organism>
<gene>
    <name type="ORF">3a</name>
</gene>
<accession>P59632</accession>
<accession>Q7T6R6</accession>
<accession>Q7TA10</accession>
<accession>Q7TA18</accession>
<accession>Q7TFB0</accession>
<accession>Q7TLD0</accession>
<accession>Q80BV5</accession>
<reference key="1">
    <citation type="journal article" date="2003" name="Science">
        <title>Characterization of a novel coronavirus associated with severe acute respiratory syndrome.</title>
        <authorList>
            <person name="Rota P.A."/>
            <person name="Oberste M.S."/>
            <person name="Monroe S.S."/>
            <person name="Nix W.A."/>
            <person name="Campagnoli R."/>
            <person name="Icenogle J.P."/>
            <person name="Penaranda S."/>
            <person name="Bankamp B."/>
            <person name="Maher K."/>
            <person name="Chen M.-H."/>
            <person name="Tong S."/>
            <person name="Tamin A."/>
            <person name="Lowe L."/>
            <person name="Frace M."/>
            <person name="DeRisi J.L."/>
            <person name="Chen Q."/>
            <person name="Wang D."/>
            <person name="Erdman D.D."/>
            <person name="Peret T.C.T."/>
            <person name="Burns C."/>
            <person name="Ksiazek T.G."/>
            <person name="Rollin P.E."/>
            <person name="Sanchez A."/>
            <person name="Liffick S."/>
            <person name="Holloway B."/>
            <person name="Limor J."/>
            <person name="McCaustland K."/>
            <person name="Olsen-Rasmussen M."/>
            <person name="Fouchier R."/>
            <person name="Guenther S."/>
            <person name="Osterhaus A.D.M.E."/>
            <person name="Drosten C."/>
            <person name="Pallansch M.A."/>
            <person name="Anderson L.J."/>
            <person name="Bellini W.J."/>
        </authorList>
    </citation>
    <scope>NUCLEOTIDE SEQUENCE [GENOMIC RNA]</scope>
    <source>
        <strain>Isolate Urbani</strain>
    </source>
</reference>
<reference key="2">
    <citation type="journal article" date="2003" name="Science">
        <title>The genome sequence of the SARS-associated coronavirus.</title>
        <authorList>
            <person name="Marra M.A."/>
            <person name="Jones S.J.M."/>
            <person name="Astell C.R."/>
            <person name="Holt R.A."/>
            <person name="Brooks-Wilson A."/>
            <person name="Butterfield Y.S.N."/>
            <person name="Khattra J."/>
            <person name="Asano J.K."/>
            <person name="Barber S.A."/>
            <person name="Chan S.Y."/>
            <person name="Cloutier A."/>
            <person name="Coughlin S.M."/>
            <person name="Freeman D."/>
            <person name="Girn N."/>
            <person name="Griffith O.L."/>
            <person name="Leach S.R."/>
            <person name="Mayo M."/>
            <person name="McDonald H."/>
            <person name="Montgomery S.B."/>
            <person name="Pandoh P.K."/>
            <person name="Petrescu A.S."/>
            <person name="Robertson A.G."/>
            <person name="Schein J.E."/>
            <person name="Siddiqui A."/>
            <person name="Smailus D.E."/>
            <person name="Stott J.M."/>
            <person name="Yang G.S."/>
            <person name="Plummer F."/>
            <person name="Andonov A."/>
            <person name="Artsob H."/>
            <person name="Bastien N."/>
            <person name="Bernard K."/>
            <person name="Booth T.F."/>
            <person name="Bowness D."/>
            <person name="Czub M."/>
            <person name="Drebot M."/>
            <person name="Fernando L."/>
            <person name="Flick R."/>
            <person name="Garbutt M."/>
            <person name="Gray M."/>
            <person name="Grolla A."/>
            <person name="Jones S."/>
            <person name="Feldmann H."/>
            <person name="Meyers A."/>
            <person name="Kabani A."/>
            <person name="Li Y."/>
            <person name="Normand S."/>
            <person name="Stroher U."/>
            <person name="Tipples G.A."/>
            <person name="Tyler S."/>
            <person name="Vogrig R."/>
            <person name="Ward D."/>
            <person name="Watson B."/>
            <person name="Brunham R.C."/>
            <person name="Krajden M."/>
            <person name="Petric M."/>
            <person name="Skowronski D.M."/>
            <person name="Upton C."/>
            <person name="Roper R.L."/>
        </authorList>
    </citation>
    <scope>NUCLEOTIDE SEQUENCE [GENOMIC RNA]</scope>
    <source>
        <strain>Isolate Tor2</strain>
    </source>
</reference>
<reference key="3">
    <citation type="journal article" date="2003" name="N. Engl. J. Med.">
        <title>Coronavirus genomic-sequence variations and the epidemiology of the severe acute respiratory syndrome.</title>
        <authorList>
            <person name="Tsui S.K.W."/>
            <person name="Chim S.S.C."/>
            <person name="Lo Y.M.D."/>
        </authorList>
    </citation>
    <scope>NUCLEOTIDE SEQUENCE [GENOMIC RNA]</scope>
    <source>
        <strain>Isolate CUHK-Su10</strain>
        <strain>Isolate CUHK-W1</strain>
    </source>
</reference>
<reference key="4">
    <citation type="journal article" date="2003" name="Exp. Biol. Med.">
        <title>The complete genome sequence of severe acute respiratory syndrome coronavirus strain HKU-39849 (HK-39).</title>
        <authorList>
            <person name="Zeng F.Y."/>
            <person name="Chan C.W."/>
            <person name="Chan M.N."/>
            <person name="Chen J.D."/>
            <person name="Chow K.Y.C."/>
            <person name="Hon C.C.C."/>
            <person name="Hui R.K.H."/>
            <person name="Li J."/>
            <person name="Li V.Y.Y."/>
            <person name="Wang C.Y."/>
            <person name="Wang P.Y."/>
            <person name="Guan Y."/>
            <person name="Zheng B."/>
            <person name="Poon L.L.M."/>
            <person name="Chan K.H."/>
            <person name="Yuen K.Y."/>
            <person name="Peiris J.S.M."/>
            <person name="Leung F.C."/>
        </authorList>
    </citation>
    <scope>NUCLEOTIDE SEQUENCE [GENOMIC RNA]</scope>
    <source>
        <strain>Isolate HKU-39849</strain>
    </source>
</reference>
<reference key="5">
    <citation type="submission" date="2003-04" db="EMBL/GenBank/DDBJ databases">
        <authorList>
            <person name="Qin E."/>
            <person name="Zhu Q."/>
            <person name="Yu M."/>
            <person name="Fan B."/>
            <person name="Chang G."/>
            <person name="Si B."/>
            <person name="Yang B."/>
            <person name="Peng W."/>
            <person name="Jiang T."/>
            <person name="Liu B."/>
            <person name="Deng Y."/>
            <person name="Liu H."/>
            <person name="Zhang Y."/>
            <person name="Wang C."/>
            <person name="Li Y."/>
            <person name="Gan Y."/>
            <person name="Li X."/>
            <person name="Lu F."/>
            <person name="Tan G."/>
            <person name="Yang R."/>
            <person name="Cao W.S."/>
            <person name="Wang J."/>
            <person name="Chen W."/>
            <person name="Cong L."/>
            <person name="Deng Y."/>
            <person name="Dong W."/>
            <person name="Han Y."/>
            <person name="Hu W."/>
            <person name="Lei M."/>
            <person name="Li C."/>
            <person name="Li G."/>
            <person name="Li G."/>
            <person name="Li H."/>
            <person name="Li S."/>
            <person name="Li S."/>
            <person name="Li W."/>
            <person name="Li W."/>
            <person name="Lin W."/>
            <person name="Liu J."/>
            <person name="Liu Z."/>
            <person name="Lu H."/>
            <person name="Ni P."/>
            <person name="Qi Q."/>
            <person name="Sun Y."/>
            <person name="Tang L."/>
            <person name="Tong Z."/>
            <person name="Wang J."/>
            <person name="Wang X."/>
            <person name="Wu Q."/>
            <person name="Xi Y."/>
            <person name="Xu Z."/>
            <person name="Yang L."/>
            <person name="Ye C."/>
            <person name="Ye J."/>
            <person name="Zhang B."/>
            <person name="Zhang F."/>
            <person name="Zhang J."/>
            <person name="Zhang X."/>
            <person name="Zhou J."/>
            <person name="Yang H."/>
        </authorList>
    </citation>
    <scope>NUCLEOTIDE SEQUENCE [GENOMIC RNA]</scope>
    <source>
        <strain>Isolate BJ01</strain>
        <strain>Isolate BJ02</strain>
        <strain>Isolate BJ03</strain>
        <strain>Isolate BJ04</strain>
        <strain>Isolate GD01</strain>
    </source>
</reference>
<reference key="6">
    <citation type="submission" date="2003-05" db="EMBL/GenBank/DDBJ databases">
        <title>The complete genome of SARS coronavirus clone TW1.</title>
        <authorList>
            <person name="Yeh S.-H."/>
            <person name="Kao C.-L."/>
            <person name="Tsai C.-Y."/>
            <person name="Liu C.-J."/>
            <person name="Chen D.-S."/>
            <person name="Chen P.-J."/>
        </authorList>
    </citation>
    <scope>NUCLEOTIDE SEQUENCE [GENOMIC RNA]</scope>
    <source>
        <strain>Isolate TW1</strain>
    </source>
</reference>
<reference key="7">
    <citation type="submission" date="2003-05" db="EMBL/GenBank/DDBJ databases">
        <title>SARS virus is a close relative of type II coronaviruses.</title>
        <authorList>
            <person name="Eickmann M."/>
            <person name="Becker S."/>
            <person name="Klenk H.-D."/>
            <person name="Doerr H.W."/>
            <person name="Stadler K."/>
            <person name="Censini S."/>
            <person name="Guidotti S."/>
            <person name="Masignani V."/>
            <person name="Scarselli M."/>
            <person name="Mora M."/>
            <person name="Donati C."/>
            <person name="Han J."/>
            <person name="Song H.C."/>
            <person name="Abrignani S."/>
            <person name="Covacci A."/>
            <person name="Rappuoli R."/>
        </authorList>
    </citation>
    <scope>NUCLEOTIDE SEQUENCE [GENOMIC RNA]</scope>
    <source>
        <strain>Isolate FRA</strain>
    </source>
</reference>
<reference key="8">
    <citation type="submission" date="2003-05" db="EMBL/GenBank/DDBJ databases">
        <authorList>
            <person name="Thiel V."/>
            <person name="Hertzig T."/>
            <person name="Putics A."/>
            <person name="Ivanov K.A."/>
            <person name="Schelle B."/>
            <person name="Bayer S."/>
            <person name="Scheiner B."/>
            <person name="Weinand H."/>
            <person name="Weissbrich B."/>
            <person name="Ziebuhr J."/>
        </authorList>
    </citation>
    <scope>NUCLEOTIDE SEQUENCE [GENOMIC RNA]</scope>
    <source>
        <strain>Isolate Frankfurt 1</strain>
    </source>
</reference>
<reference key="9">
    <citation type="submission" date="2003-07" db="EMBL/GenBank/DDBJ databases">
        <authorList>
            <person name="Chang J.-G.C."/>
            <person name="Lin T.-H."/>
            <person name="Chen C.-M."/>
            <person name="Lin C.-S."/>
            <person name="Chan W.-L."/>
            <person name="Shih M.-C."/>
        </authorList>
    </citation>
    <scope>NUCLEOTIDE SEQUENCE [GENOMIC RNA]</scope>
    <source>
        <strain>Isolate Taiwan TC1</strain>
        <strain>Isolate Taiwan TC2</strain>
        <strain>Isolate Taiwan TC3</strain>
    </source>
</reference>
<reference key="10">
    <citation type="submission" date="2003-07" db="EMBL/GenBank/DDBJ databases">
        <title>The complete genome of SARS coronavirus TWH.</title>
        <authorList>
            <person name="Shu H.Y."/>
            <person name="Wu K.M."/>
            <person name="Tsai S.F."/>
        </authorList>
    </citation>
    <scope>NUCLEOTIDE SEQUENCE [GENOMIC RNA]</scope>
    <source>
        <strain>Isolate TWH</strain>
        <strain>Isolate TWJ</strain>
        <strain>Isolate TWK</strain>
        <strain>Isolate TWS</strain>
        <strain>Isolate TWY</strain>
    </source>
</reference>
<reference key="11">
    <citation type="submission" date="2003-07" db="EMBL/GenBank/DDBJ databases">
        <authorList>
            <person name="Canducci F."/>
            <person name="Clementi M."/>
            <person name="Poli G."/>
            <person name="Vicenzi E."/>
        </authorList>
    </citation>
    <scope>NUCLEOTIDE SEQUENCE [GENOMIC RNA]</scope>
    <source>
        <strain>Isolate HSR 1</strain>
    </source>
</reference>
<reference key="12">
    <citation type="submission" date="2003-10" db="EMBL/GenBank/DDBJ databases">
        <authorList>
            <person name="Balotta C."/>
            <person name="Corvasce S."/>
            <person name="Violin M."/>
            <person name="Galli M."/>
            <person name="Moroni M."/>
            <person name="Vigevani G.M."/>
            <person name="Ruan Y.J."/>
            <person name="Salemi M."/>
        </authorList>
    </citation>
    <scope>NUCLEOTIDE SEQUENCE [GENOMIC RNA]</scope>
    <source>
        <strain>Isolate AS</strain>
    </source>
</reference>
<reference key="13">
    <citation type="submission" date="2004-01" db="EMBL/GenBank/DDBJ databases">
        <title>Analysis of SARS coronavirus genome in Shanghai isolates.</title>
        <authorList>
            <person name="Yuan Z."/>
            <person name="Zhang X."/>
            <person name="Hu Y."/>
            <person name="Lan S."/>
            <person name="Wang H."/>
            <person name="Zhou Z."/>
            <person name="Wen Y."/>
        </authorList>
    </citation>
    <scope>NUCLEOTIDE SEQUENCE [GENOMIC RNA]</scope>
    <source>
        <strain>Isolate Shanghai QXC1</strain>
    </source>
</reference>
<reference key="14">
    <citation type="submission" date="2003-06" db="EMBL/GenBank/DDBJ databases">
        <authorList>
            <person name="Yuan Z."/>
            <person name="Zhang X."/>
            <person name="Hu Y."/>
            <person name="Lan S."/>
            <person name="Wang H."/>
            <person name="Zhou Z."/>
            <person name="Wen Y."/>
        </authorList>
    </citation>
    <scope>NUCLEOTIDE SEQUENCE [GENOMIC RNA] OF 1-125</scope>
    <source>
        <strain>Isolate Shanghai LY</strain>
    </source>
</reference>
<reference key="15">
    <citation type="journal article" date="2004" name="FEBS Lett.">
        <title>Identification of a novel protein 3a from severe acute respiratory syndrome coronavirus.</title>
        <authorList>
            <person name="Yu C.-J."/>
            <person name="Chen Y.-C."/>
            <person name="Hsiao C.-H."/>
            <person name="Kuo T.-C."/>
            <person name="Chang S.C."/>
            <person name="Lu C.-Y."/>
            <person name="Wei W.-C."/>
            <person name="Lee C.-H."/>
            <person name="Huang L.-M."/>
            <person name="Chang M.-F."/>
            <person name="Ho H.-N."/>
            <person name="Lee F.-J.S."/>
        </authorList>
    </citation>
    <scope>IDENTIFICATION</scope>
</reference>
<reference key="16">
    <citation type="journal article" date="2004" name="J. Virol.">
        <title>A novel severe acute respiratory syndrome coronavirus protein, U274, is transported to the cell surface and undergoes endocytosis.</title>
        <authorList>
            <person name="Tan Y.-J."/>
            <person name="Teng E."/>
            <person name="Shen S."/>
            <person name="Tan T.H.P."/>
            <person name="Goh P.-Y."/>
            <person name="Fielding B.C."/>
            <person name="Ooi E.-E."/>
            <person name="Tan H.-C."/>
            <person name="Lim S.G."/>
            <person name="Hong W."/>
        </authorList>
    </citation>
    <scope>SUBCELLULAR LOCATION</scope>
    <scope>TOPOLOGY</scope>
    <scope>INTERACTION WITH M PROTEIN; E PROTEIN; SPIKE GLYCOPROTEIN AND ACCESSORY PROTEIN 7A</scope>
</reference>
<reference key="17">
    <citation type="journal article" date="2005" name="Virus Res.">
        <title>Subcellular localization and membrane association of SARS-CoV 3a protein.</title>
        <authorList>
            <person name="Yuan X."/>
            <person name="Li J."/>
            <person name="Shan Y."/>
            <person name="Yang Z."/>
            <person name="Zhao Z."/>
            <person name="Chen B."/>
            <person name="Yao Z."/>
            <person name="Dong B."/>
            <person name="Wang S."/>
            <person name="Chen J."/>
            <person name="Cong Y."/>
        </authorList>
    </citation>
    <scope>SUBCELLULAR LOCATION</scope>
    <scope>INTERACTION WITH M AND E PROTEINS</scope>
</reference>
<reference key="18">
    <citation type="journal article" date="2005" name="Biochem. Biophys. Res. Commun.">
        <title>The severe acute respiratory syndrome coronavirus 3a is a novel structural protein.</title>
        <authorList>
            <person name="Shen S."/>
            <person name="Lin P.S."/>
            <person name="Chao Y.C."/>
            <person name="Zhang A."/>
            <person name="Yang X."/>
            <person name="Lim S.G."/>
            <person name="Hong W."/>
            <person name="Tan Y.J."/>
        </authorList>
    </citation>
    <scope>CHARACTERIZATION</scope>
</reference>
<reference key="19">
    <citation type="journal article" date="2005" name="J. Virol.">
        <title>Severe acute respiratory syndrome coronavirus 3a protein is a viral structural protein.</title>
        <authorList>
            <person name="Ito N."/>
            <person name="Mossel E.C."/>
            <person name="Narayanan K."/>
            <person name="Popov V.L."/>
            <person name="Huang C."/>
            <person name="Inoue T."/>
            <person name="Peters C.J."/>
            <person name="Makino S."/>
        </authorList>
    </citation>
    <scope>CHARACTERIZATION</scope>
    <scope>SUBCELLULAR LOCATION</scope>
</reference>
<reference key="20">
    <citation type="journal article" date="2005" name="J. Virol.">
        <title>The severe acute respiratory syndrome coronavirus 3a protein up-regulates expression of fibrinogen in lung epithelial cells.</title>
        <authorList>
            <person name="Tan Y.J."/>
            <person name="Tham P.Y."/>
            <person name="Chan D.Z."/>
            <person name="Chou C.-F."/>
            <person name="Shen S."/>
            <person name="Fielding B.C."/>
            <person name="Tan T.H."/>
            <person name="Lim S.G."/>
            <person name="Hong W."/>
        </authorList>
    </citation>
    <scope>FUNCTION</scope>
</reference>
<reference key="21">
    <citation type="journal article" date="2005" name="J. Gen. Virol.">
        <title>The 3a protein of severe acute respiratory syndrome-associated coronavirus induces apoptosis in Vero E6 cells.</title>
        <authorList>
            <person name="Law P.T."/>
            <person name="Wong C.H."/>
            <person name="Au T.C."/>
            <person name="Chuck C.P."/>
            <person name="Kong S.K."/>
            <person name="Chan P.K."/>
            <person name="To K.F."/>
            <person name="Lo A.W."/>
            <person name="Chan J.Y."/>
            <person name="Suen Y.K."/>
            <person name="Chan H.Y."/>
            <person name="Fung K.P."/>
            <person name="Waye M.M."/>
            <person name="Sung J.J."/>
            <person name="Lo Y.M.D."/>
            <person name="Tsui S.K.W."/>
        </authorList>
    </citation>
    <scope>FUNCTION</scope>
</reference>
<reference key="22">
    <citation type="journal article" date="2006" name="J. Virol.">
        <title>Glycosylation of the severe acute respiratory syndrome coronavirus triple-spanning membrane proteins 3a and M.</title>
        <authorList>
            <person name="Oostra M."/>
            <person name="de Haan C.A."/>
            <person name="de Groot R.J."/>
            <person name="Rottier P.J.M."/>
        </authorList>
    </citation>
    <scope>GLYCOSYLATION</scope>
    <scope>MUTAGENESIS OF SER-27; THR-28; THR-32 AND THR-34</scope>
</reference>
<reference key="23">
    <citation type="journal article" date="2006" name="J. Virol.">
        <title>Severe acute respiratory syndrome coronavirus 3a protein is released in membranous structures from 3a protein-expressing cells and infected cells.</title>
        <authorList>
            <person name="Huang C."/>
            <person name="Narayanan K."/>
            <person name="Ito N."/>
            <person name="Peters C.J."/>
            <person name="Makino S."/>
        </authorList>
    </citation>
    <scope>SUBCELLULAR LOCATION</scope>
</reference>
<reference key="24">
    <citation type="journal article" date="2006" name="Proc. Natl. Acad. Sci. U.S.A.">
        <title>Severe acute respiratory syndrome-associated coronavirus 3a protein forms an ion channel and modulates virus release.</title>
        <authorList>
            <person name="Lu W."/>
            <person name="Zheng B.-J."/>
            <person name="Xu K."/>
            <person name="Schwarz W."/>
            <person name="Du L."/>
            <person name="Wong C.K.L."/>
            <person name="Chen J."/>
            <person name="Duan S."/>
            <person name="Deubel V."/>
            <person name="Sun B."/>
        </authorList>
    </citation>
    <scope>FUNCTION</scope>
    <scope>SUBUNIT</scope>
    <scope>MUTAGENESIS OF CYS-81; CYS-117; CYS-121; CYS-127; CYS-130; CYS-133; CYS-148 AND CYS-157</scope>
</reference>
<reference key="25">
    <citation type="journal article" date="2009" name="PLoS ONE">
        <title>The SARS Coronavirus 3a protein causes endoplasmic reticulum stress and induces ligand-independent downregulation of the type 1 interferon receptor.</title>
        <authorList>
            <person name="Minakshi R."/>
            <person name="Padhan K."/>
            <person name="Rani M."/>
            <person name="Khan N."/>
            <person name="Ahmad F."/>
            <person name="Jameel S."/>
        </authorList>
    </citation>
    <scope>FUNCTION</scope>
</reference>
<evidence type="ECO:0000255" key="1"/>
<evidence type="ECO:0000255" key="2">
    <source>
        <dbReference type="PROSITE-ProRule" id="PRU01311"/>
    </source>
</evidence>
<evidence type="ECO:0000255" key="3">
    <source>
        <dbReference type="PROSITE-ProRule" id="PRU01312"/>
    </source>
</evidence>
<evidence type="ECO:0000269" key="4">
    <source>
    </source>
</evidence>
<evidence type="ECO:0000269" key="5">
    <source>
    </source>
</evidence>
<evidence type="ECO:0000269" key="6">
    <source>
    </source>
</evidence>
<evidence type="ECO:0000269" key="7">
    <source>
    </source>
</evidence>
<evidence type="ECO:0000269" key="8">
    <source>
    </source>
</evidence>
<evidence type="ECO:0000269" key="9">
    <source>
    </source>
</evidence>
<evidence type="ECO:0000269" key="10">
    <source>
    </source>
</evidence>
<evidence type="ECO:0000305" key="11">
    <source>
    </source>
</evidence>
<evidence type="ECO:0000305" key="12">
    <source>
    </source>
</evidence>
<evidence type="ECO:0007829" key="13">
    <source>
        <dbReference type="PDB" id="8EQS"/>
    </source>
</evidence>
<proteinExistence type="evidence at protein level"/>